<protein>
    <recommendedName>
        <fullName evidence="2">Large ribosomal subunit protein uL6</fullName>
    </recommendedName>
    <alternativeName>
        <fullName>60S ribosomal protein L9-B</fullName>
    </alternativeName>
</protein>
<accession>Q5AEN2</accession>
<keyword id="KW-0002">3D-structure</keyword>
<keyword id="KW-0963">Cytoplasm</keyword>
<keyword id="KW-1185">Reference proteome</keyword>
<keyword id="KW-0687">Ribonucleoprotein</keyword>
<keyword id="KW-0689">Ribosomal protein</keyword>
<organism>
    <name type="scientific">Candida albicans (strain SC5314 / ATCC MYA-2876)</name>
    <name type="common">Yeast</name>
    <dbReference type="NCBI Taxonomy" id="237561"/>
    <lineage>
        <taxon>Eukaryota</taxon>
        <taxon>Fungi</taxon>
        <taxon>Dikarya</taxon>
        <taxon>Ascomycota</taxon>
        <taxon>Saccharomycotina</taxon>
        <taxon>Pichiomycetes</taxon>
        <taxon>Debaryomycetaceae</taxon>
        <taxon>Candida/Lodderomyces clade</taxon>
        <taxon>Candida</taxon>
    </lineage>
</organism>
<reference key="1">
    <citation type="journal article" date="2004" name="Proc. Natl. Acad. Sci. U.S.A.">
        <title>The diploid genome sequence of Candida albicans.</title>
        <authorList>
            <person name="Jones T."/>
            <person name="Federspiel N.A."/>
            <person name="Chibana H."/>
            <person name="Dungan J."/>
            <person name="Kalman S."/>
            <person name="Magee B.B."/>
            <person name="Newport G."/>
            <person name="Thorstenson Y.R."/>
            <person name="Agabian N."/>
            <person name="Magee P.T."/>
            <person name="Davis R.W."/>
            <person name="Scherer S."/>
        </authorList>
    </citation>
    <scope>NUCLEOTIDE SEQUENCE [LARGE SCALE GENOMIC DNA]</scope>
    <source>
        <strain>SC5314 / ATCC MYA-2876</strain>
    </source>
</reference>
<reference key="2">
    <citation type="journal article" date="2007" name="Genome Biol.">
        <title>Assembly of the Candida albicans genome into sixteen supercontigs aligned on the eight chromosomes.</title>
        <authorList>
            <person name="van het Hoog M."/>
            <person name="Rast T.J."/>
            <person name="Martchenko M."/>
            <person name="Grindle S."/>
            <person name="Dignard D."/>
            <person name="Hogues H."/>
            <person name="Cuomo C."/>
            <person name="Berriman M."/>
            <person name="Scherer S."/>
            <person name="Magee B.B."/>
            <person name="Whiteway M."/>
            <person name="Chibana H."/>
            <person name="Nantel A."/>
            <person name="Magee P.T."/>
        </authorList>
    </citation>
    <scope>GENOME REANNOTATION</scope>
    <source>
        <strain>SC5314 / ATCC MYA-2876</strain>
    </source>
</reference>
<reference key="3">
    <citation type="journal article" date="2013" name="Genome Biol.">
        <title>Assembly of a phased diploid Candida albicans genome facilitates allele-specific measurements and provides a simple model for repeat and indel structure.</title>
        <authorList>
            <person name="Muzzey D."/>
            <person name="Schwartz K."/>
            <person name="Weissman J.S."/>
            <person name="Sherlock G."/>
        </authorList>
    </citation>
    <scope>NUCLEOTIDE SEQUENCE [LARGE SCALE GENOMIC DNA]</scope>
    <scope>GENOME REANNOTATION</scope>
    <source>
        <strain>SC5314 / ATCC MYA-2876</strain>
    </source>
</reference>
<reference evidence="5 6 7" key="4">
    <citation type="journal article" date="2022" name="Sci. Adv.">
        <title>E-site drug specificity of the human pathogen Candida albicans ribosome.</title>
        <authorList>
            <person name="Zgadzay Y."/>
            <person name="Kolosova O."/>
            <person name="Stetsenko A."/>
            <person name="Wu C."/>
            <person name="Bruchlen D."/>
            <person name="Usachev K."/>
            <person name="Validov S."/>
            <person name="Jenner L."/>
            <person name="Rogachev A."/>
            <person name="Yusupova G."/>
            <person name="Sachs M.S."/>
            <person name="Guskov A."/>
            <person name="Yusupov M."/>
        </authorList>
    </citation>
    <scope>STRUCTURE BY ELECTRON MICROSCOPY (2.32 ANGSTROMS) OF THE 80S RIBOSOME</scope>
    <scope>SUBUNIT</scope>
</reference>
<gene>
    <name evidence="2" type="primary">RPL9B</name>
    <name type="synonym">RPL9</name>
    <name type="ordered locus">orf19.236</name>
    <name type="ORF">CAALFM_C302470CA</name>
</gene>
<evidence type="ECO:0000269" key="1">
    <source>
    </source>
</evidence>
<evidence type="ECO:0000303" key="2">
    <source>
    </source>
</evidence>
<evidence type="ECO:0000305" key="3"/>
<evidence type="ECO:0000305" key="4">
    <source>
    </source>
</evidence>
<evidence type="ECO:0007744" key="5">
    <source>
        <dbReference type="PDB" id="7PZY"/>
    </source>
</evidence>
<evidence type="ECO:0007744" key="6">
    <source>
        <dbReference type="PDB" id="7Q0F"/>
    </source>
</evidence>
<evidence type="ECO:0007744" key="7">
    <source>
        <dbReference type="PDB" id="7Q0P"/>
    </source>
</evidence>
<dbReference type="EMBL" id="CP017625">
    <property type="protein sequence ID" value="AOW28282.1"/>
    <property type="molecule type" value="Genomic_DNA"/>
</dbReference>
<dbReference type="RefSeq" id="XP_719935.1">
    <property type="nucleotide sequence ID" value="XM_714842.1"/>
</dbReference>
<dbReference type="PDB" id="7PZY">
    <property type="method" value="EM"/>
    <property type="resolution" value="2.32 A"/>
    <property type="chains" value="q=1-191"/>
</dbReference>
<dbReference type="PDB" id="7Q08">
    <property type="method" value="EM"/>
    <property type="resolution" value="2.56 A"/>
    <property type="chains" value="q=1-191"/>
</dbReference>
<dbReference type="PDB" id="7Q0F">
    <property type="method" value="EM"/>
    <property type="resolution" value="2.64 A"/>
    <property type="chains" value="q=1-191"/>
</dbReference>
<dbReference type="PDB" id="7Q0P">
    <property type="method" value="EM"/>
    <property type="resolution" value="2.77 A"/>
    <property type="chains" value="q=1-191"/>
</dbReference>
<dbReference type="PDB" id="7Q0R">
    <property type="method" value="EM"/>
    <property type="resolution" value="2.67 A"/>
    <property type="chains" value="q=1-191"/>
</dbReference>
<dbReference type="PDB" id="8C3A">
    <property type="method" value="X-ray"/>
    <property type="resolution" value="3.00 A"/>
    <property type="chains" value="BD/q=1-191"/>
</dbReference>
<dbReference type="PDB" id="8OGJ">
    <property type="method" value="EM"/>
    <property type="resolution" value="3.10 A"/>
    <property type="chains" value="q=1-191"/>
</dbReference>
<dbReference type="PDB" id="8OH6">
    <property type="method" value="X-ray"/>
    <property type="resolution" value="3.35 A"/>
    <property type="chains" value="BD/q=1-191"/>
</dbReference>
<dbReference type="PDB" id="8OI5">
    <property type="method" value="X-ray"/>
    <property type="resolution" value="2.90 A"/>
    <property type="chains" value="BD/q=1-191"/>
</dbReference>
<dbReference type="PDB" id="8OJ3">
    <property type="method" value="X-ray"/>
    <property type="resolution" value="3.50 A"/>
    <property type="chains" value="BD/q=1-191"/>
</dbReference>
<dbReference type="PDBsum" id="7PZY"/>
<dbReference type="PDBsum" id="7Q08"/>
<dbReference type="PDBsum" id="7Q0F"/>
<dbReference type="PDBsum" id="7Q0P"/>
<dbReference type="PDBsum" id="7Q0R"/>
<dbReference type="PDBsum" id="8C3A"/>
<dbReference type="PDBsum" id="8OGJ"/>
<dbReference type="PDBsum" id="8OH6"/>
<dbReference type="PDBsum" id="8OI5"/>
<dbReference type="PDBsum" id="8OJ3"/>
<dbReference type="SMR" id="Q5AEN2"/>
<dbReference type="FunCoup" id="Q5AEN2">
    <property type="interactions" value="975"/>
</dbReference>
<dbReference type="STRING" id="237561.Q5AEN2"/>
<dbReference type="EnsemblFungi" id="C3_02470C_A-T">
    <property type="protein sequence ID" value="C3_02470C_A-T-p1"/>
    <property type="gene ID" value="C3_02470C_A"/>
</dbReference>
<dbReference type="GeneID" id="3638348"/>
<dbReference type="KEGG" id="cal:CAALFM_C302470CA"/>
<dbReference type="CGD" id="CAL0000184881">
    <property type="gene designation" value="RPL9B"/>
</dbReference>
<dbReference type="VEuPathDB" id="FungiDB:C3_02470C_A"/>
<dbReference type="eggNOG" id="KOG3255">
    <property type="taxonomic scope" value="Eukaryota"/>
</dbReference>
<dbReference type="HOGENOM" id="CLU_065464_0_0_1"/>
<dbReference type="InParanoid" id="Q5AEN2"/>
<dbReference type="OrthoDB" id="10252633at2759"/>
<dbReference type="Proteomes" id="UP000000559">
    <property type="component" value="Chromosome 3"/>
</dbReference>
<dbReference type="GO" id="GO:0022625">
    <property type="term" value="C:cytosolic large ribosomal subunit"/>
    <property type="evidence" value="ECO:0000318"/>
    <property type="project" value="GO_Central"/>
</dbReference>
<dbReference type="GO" id="GO:0019843">
    <property type="term" value="F:rRNA binding"/>
    <property type="evidence" value="ECO:0007669"/>
    <property type="project" value="InterPro"/>
</dbReference>
<dbReference type="GO" id="GO:0003735">
    <property type="term" value="F:structural constituent of ribosome"/>
    <property type="evidence" value="ECO:0000318"/>
    <property type="project" value="GO_Central"/>
</dbReference>
<dbReference type="GO" id="GO:0002181">
    <property type="term" value="P:cytoplasmic translation"/>
    <property type="evidence" value="ECO:0000318"/>
    <property type="project" value="GO_Central"/>
</dbReference>
<dbReference type="FunFam" id="3.90.930.12:FF:000003">
    <property type="entry name" value="60S ribosomal protein L9"/>
    <property type="match status" value="1"/>
</dbReference>
<dbReference type="FunFam" id="3.90.930.12:FF:000004">
    <property type="entry name" value="60S ribosomal protein L9"/>
    <property type="match status" value="1"/>
</dbReference>
<dbReference type="Gene3D" id="3.90.930.12">
    <property type="entry name" value="Ribosomal protein L6, alpha-beta domain"/>
    <property type="match status" value="2"/>
</dbReference>
<dbReference type="InterPro" id="IPR000702">
    <property type="entry name" value="Ribosomal_uL6-like"/>
</dbReference>
<dbReference type="InterPro" id="IPR036789">
    <property type="entry name" value="Ribosomal_uL6-like_a/b-dom_sf"/>
</dbReference>
<dbReference type="InterPro" id="IPR020040">
    <property type="entry name" value="Ribosomal_uL6_a/b-dom"/>
</dbReference>
<dbReference type="InterPro" id="IPR002359">
    <property type="entry name" value="Ribosomal_uL6_CS2"/>
</dbReference>
<dbReference type="PANTHER" id="PTHR11655:SF16">
    <property type="entry name" value="60S RIBOSOMAL PROTEIN L9"/>
    <property type="match status" value="1"/>
</dbReference>
<dbReference type="PANTHER" id="PTHR11655">
    <property type="entry name" value="60S/50S RIBOSOMAL PROTEIN L6/L9"/>
    <property type="match status" value="1"/>
</dbReference>
<dbReference type="Pfam" id="PF00347">
    <property type="entry name" value="Ribosomal_L6"/>
    <property type="match status" value="2"/>
</dbReference>
<dbReference type="PIRSF" id="PIRSF002162">
    <property type="entry name" value="Ribosomal_L6"/>
    <property type="match status" value="1"/>
</dbReference>
<dbReference type="SUPFAM" id="SSF56053">
    <property type="entry name" value="Ribosomal protein L6"/>
    <property type="match status" value="2"/>
</dbReference>
<dbReference type="PROSITE" id="PS00700">
    <property type="entry name" value="RIBOSOMAL_L6_2"/>
    <property type="match status" value="1"/>
</dbReference>
<comment type="function">
    <text evidence="4">Component of the ribosome, a large ribonucleoprotein complex responsible for the synthesis of proteins in the cell. The small ribosomal subunit (SSU) binds messenger RNAs (mRNAs) and translates the encoded message by selecting cognate aminoacyl-transfer RNA (tRNA) molecules. The large subunit (LSU) contains the ribosomal catalytic site termed the peptidyl transferase center (PTC), which catalyzes the formation of peptide bonds, thereby polymerizing the amino acids delivered by tRNAs into a polypeptide chain. The nascent polypeptides leave the ribosome through a tunnel in the LSU and interact with protein factors that function in enzymatic processing, targeting, and the membrane insertion of nascent chains at the exit of the ribosomal tunnel.</text>
</comment>
<comment type="subunit">
    <text evidence="1">Component of the large ribosomal subunit (PubMed:35613268). Mature ribosomes consist of a small (40S) and a large (60S) subunit (PubMed:35613268). The 40S subunit contains about 32 different proteins and 1 molecule of RNA (18S) (PubMed:35613268). The 60S subunit contains 45 different proteins and 3 molecules of RNA (25S, 5.8S and 5S) (PubMed:35613268).</text>
</comment>
<comment type="subcellular location">
    <subcellularLocation>
        <location evidence="4">Cytoplasm</location>
    </subcellularLocation>
</comment>
<comment type="similarity">
    <text evidence="3">Belongs to the universal ribosomal protein uL6 family.</text>
</comment>
<name>RL9B_CANAL</name>
<sequence>MKYIQTDQILDIPEGVTVDIKARVVKVTGPRGELTKDLKHIDVTFNKINNRAIKITVHNGDRKHVAALRTVKSLIANLITGVTKGYKYKMRFVYAHFPINVNIIKKDGQDYVEIRNFLGEKRVREVKIHEGVTMEISSTQKDELIVSGNSLEAVSQNAADIQQICRVRNKDIRKFLDGIYVSERGTIVEEI</sequence>
<proteinExistence type="evidence at protein level"/>
<feature type="chain" id="PRO_0000456495" description="Large ribosomal subunit protein uL6">
    <location>
        <begin position="1"/>
        <end position="191"/>
    </location>
</feature>